<feature type="signal peptide" evidence="2">
    <location>
        <begin position="1"/>
        <end position="21"/>
    </location>
</feature>
<feature type="chain" id="PRO_5000220487" description="Endochitinase A">
    <location>
        <begin position="22"/>
        <end position="1231"/>
    </location>
</feature>
<feature type="propeptide" id="PRO_0000429822" description="Removed in mature form" evidence="2">
    <location>
        <begin position="1232"/>
        <end position="1257"/>
    </location>
</feature>
<feature type="domain" description="GH18" evidence="3">
    <location>
        <begin position="28"/>
        <end position="339"/>
    </location>
</feature>
<feature type="region of interest" description="Disordered" evidence="4">
    <location>
        <begin position="364"/>
        <end position="429"/>
    </location>
</feature>
<feature type="region of interest" description="Disordered" evidence="4">
    <location>
        <begin position="595"/>
        <end position="980"/>
    </location>
</feature>
<feature type="region of interest" description="Disordered" evidence="4">
    <location>
        <begin position="1141"/>
        <end position="1174"/>
    </location>
</feature>
<feature type="compositionally biased region" description="Low complexity" evidence="4">
    <location>
        <begin position="595"/>
        <end position="696"/>
    </location>
</feature>
<feature type="compositionally biased region" description="Polar residues" evidence="4">
    <location>
        <begin position="700"/>
        <end position="715"/>
    </location>
</feature>
<feature type="compositionally biased region" description="Low complexity" evidence="4">
    <location>
        <begin position="716"/>
        <end position="935"/>
    </location>
</feature>
<feature type="compositionally biased region" description="Polar residues" evidence="4">
    <location>
        <begin position="940"/>
        <end position="964"/>
    </location>
</feature>
<feature type="compositionally biased region" description="Polar residues" evidence="4">
    <location>
        <begin position="1145"/>
        <end position="1154"/>
    </location>
</feature>
<feature type="compositionally biased region" description="Low complexity" evidence="4">
    <location>
        <begin position="1156"/>
        <end position="1174"/>
    </location>
</feature>
<feature type="active site" description="Proton donor" evidence="3">
    <location>
        <position position="175"/>
    </location>
</feature>
<feature type="lipid moiety-binding region" description="GPI-anchor amidated glycine" evidence="2">
    <location>
        <position position="1231"/>
    </location>
</feature>
<feature type="glycosylation site" description="N-linked (GlcNAc...) asparagine" evidence="2">
    <location>
        <position position="825"/>
    </location>
</feature>
<feature type="glycosylation site" description="N-linked (GlcNAc...) asparagine" evidence="2">
    <location>
        <position position="973"/>
    </location>
</feature>
<accession>A2QUQ2</accession>
<name>CHIA1_ASPNC</name>
<protein>
    <recommendedName>
        <fullName>Endochitinase A</fullName>
        <ecNumber>3.2.1.14</ecNumber>
    </recommendedName>
    <alternativeName>
        <fullName>Chitinase A</fullName>
    </alternativeName>
</protein>
<keyword id="KW-0119">Carbohydrate metabolism</keyword>
<keyword id="KW-1003">Cell membrane</keyword>
<keyword id="KW-0134">Cell wall</keyword>
<keyword id="KW-0146">Chitin degradation</keyword>
<keyword id="KW-0147">Chitin-binding</keyword>
<keyword id="KW-0325">Glycoprotein</keyword>
<keyword id="KW-0326">Glycosidase</keyword>
<keyword id="KW-0336">GPI-anchor</keyword>
<keyword id="KW-0378">Hydrolase</keyword>
<keyword id="KW-0449">Lipoprotein</keyword>
<keyword id="KW-0472">Membrane</keyword>
<keyword id="KW-0624">Polysaccharide degradation</keyword>
<keyword id="KW-1185">Reference proteome</keyword>
<keyword id="KW-0964">Secreted</keyword>
<keyword id="KW-0732">Signal</keyword>
<gene>
    <name type="primary">ctcA</name>
    <name type="synonym">chiF</name>
    <name type="synonym">cts1</name>
    <name type="ORF">An09g06400</name>
</gene>
<sequence length="1257" mass="122094">MVFKPLTIAAAIAGLTPFVSAFDAQAKSNVAVYYGQGYGQQRLSHFCQETSLDIINIGFINTFPDQGAAGWPGSNFGNQCDGLTYEVDGVSTKLLSGCHQIAEDIPICQAAGKKVLLSLGGASPDNQQILSDASAVRFADFLWGAFGPQTEEWVSNDGPRPFGEVVVDGFDFDIEHNGGFGYATMVNRFRELFALVPERTFYISGAPQCPIPDPQLSDAIAQSPFDFVWVQFYNTAGCAASDSINGVSTGFNFDDWVDVIKRGANPDAKLYVGLPAGPGAAGAGYYLTPEEVYPLVDVYMNLYPETFGGIMLWEATASDENTFSGLTFADVIKDILVAVDPSPPVPSPSSSSVIASSTPVASSTPVASSAPASSTPISSGSPVPSSSAVSSSPAVSSTTESSSTQVVSGSVSASSSPITSSPVASSTPVASSAPSATSSAVASSSPIAPSSPVASSSAIASSSAIASSSAIASSSAIASSSAIASSSAIASSSAIASSSAIASSSAIASSSAIASSSAIASSSAIASSSAIASSSPVAPSSPVASSSPAVSSSAIVSSTPAVSTPVASSIPVISSPAIASGSAIASSSHVASSSTPAASSSPAVSSSPVASSSPALSSSPSASASSTPIIPSSTASSAVVSSSPTPSSSVVRSSSLLSSSSPALSSTRTPSNPVIPSSSAISITPSSTPVRSTSSVAPGKSSSAPVIPKPSSTVIATFTSSSGSLPSSSAPAGSGVPSSSTLPHPSSTSLLSSSPVSSAEPVSSSSAVGTSVGSSSNVVTGVSTRSSSSVVPSGTPIPPVSGTATESVTSSSSGSGSPTVPSSINTSSTDASSSSSASSVEPTSSGSVITSVTSSSASRVSSSSSSVVITNPSVPSDSSSSSGSELSTTSSTESTSSASSQTGAPTTSVSLGSSEAASTSTSGAAASGSGAQDSTKPTDHASTLSPSYSTPLASASGQTGSPTTVPAGIPTGNGSGLAPITSSITSAQAVPSVTSSGLESEPEPTITTTVIVTSYIDICPEGFTTITTTYTTTYCPATVSATATATAAVTNPPGAPAQTTSPSVPEGWTTTVTVCTHCAPTPTTVTLTLPATNRPSALASSTSAPNSPEDWTTTVSVCTDCGPTPTTVTVTIPVGAATGVDALTASPSGSQPAGESSPGQSAPTAPASTAPTTTETVIVVPSQSSTSQPVILGTGSVRASSTFHIQPSQSGSRVPVAPSGTAAGVSPVFTGAASRVSRLQHGAGAVSAFALFLLAAI</sequence>
<proteinExistence type="evidence at transcript level"/>
<evidence type="ECO:0000250" key="1"/>
<evidence type="ECO:0000255" key="2"/>
<evidence type="ECO:0000255" key="3">
    <source>
        <dbReference type="PROSITE-ProRule" id="PRU01258"/>
    </source>
</evidence>
<evidence type="ECO:0000256" key="4">
    <source>
        <dbReference type="SAM" id="MobiDB-lite"/>
    </source>
</evidence>
<evidence type="ECO:0000269" key="5">
    <source>
    </source>
</evidence>
<evidence type="ECO:0000269" key="6">
    <source>
    </source>
</evidence>
<evidence type="ECO:0000305" key="7"/>
<organism>
    <name type="scientific">Aspergillus niger (strain ATCC MYA-4892 / CBS 513.88 / FGSC A1513)</name>
    <dbReference type="NCBI Taxonomy" id="425011"/>
    <lineage>
        <taxon>Eukaryota</taxon>
        <taxon>Fungi</taxon>
        <taxon>Dikarya</taxon>
        <taxon>Ascomycota</taxon>
        <taxon>Pezizomycotina</taxon>
        <taxon>Eurotiomycetes</taxon>
        <taxon>Eurotiomycetidae</taxon>
        <taxon>Eurotiales</taxon>
        <taxon>Aspergillaceae</taxon>
        <taxon>Aspergillus</taxon>
        <taxon>Aspergillus subgen. Circumdati</taxon>
    </lineage>
</organism>
<comment type="function">
    <text evidence="1">GPI-anchored chitinase involved in the degradation of chitin, a component of the cell walls of fungi and exoskeletal elements of some animals (including worms and arthropods). Required to reshape the cell wall at the sites where cell wall remodeling and/or cell wall maturation actively take place such as sites of conidia formation (By similarity).</text>
</comment>
<comment type="catalytic activity">
    <reaction>
        <text>Random endo-hydrolysis of N-acetyl-beta-D-glucosaminide (1-&gt;4)-beta-linkages in chitin and chitodextrins.</text>
        <dbReference type="EC" id="3.2.1.14"/>
    </reaction>
</comment>
<comment type="subcellular location">
    <subcellularLocation>
        <location evidence="1">Cell membrane</location>
        <topology evidence="1">Lipid-anchor</topology>
        <topology evidence="1">GPI-anchor</topology>
    </subcellularLocation>
    <subcellularLocation>
        <location evidence="1">Secreted</location>
        <location evidence="1">Cell wall</location>
    </subcellularLocation>
</comment>
<comment type="induction">
    <text evidence="5 6">Highly expressed in germinated conidia. Expression is induced by tunicamycin and DTT.</text>
</comment>
<comment type="PTM">
    <text evidence="1">O-glycosylated.</text>
</comment>
<comment type="similarity">
    <text evidence="7">Belongs to the glycosyl hydrolase 18 family. Chitinase class III subfamily.</text>
</comment>
<dbReference type="EC" id="3.2.1.14"/>
<dbReference type="EMBL" id="AM270210">
    <property type="protein sequence ID" value="CAK40432.1"/>
    <property type="molecule type" value="Genomic_DNA"/>
</dbReference>
<dbReference type="SMR" id="A2QUQ2"/>
<dbReference type="CAZy" id="GH18">
    <property type="family name" value="Glycoside Hydrolase Family 18"/>
</dbReference>
<dbReference type="GlyCosmos" id="A2QUQ2">
    <property type="glycosylation" value="2 sites, No reported glycans"/>
</dbReference>
<dbReference type="EnsemblFungi" id="CAK40432">
    <property type="protein sequence ID" value="CAK40432"/>
    <property type="gene ID" value="An09g06400"/>
</dbReference>
<dbReference type="VEuPathDB" id="FungiDB:An09g06400"/>
<dbReference type="HOGENOM" id="CLU_009107_0_0_1"/>
<dbReference type="Proteomes" id="UP000006706">
    <property type="component" value="Chromosome 1L"/>
</dbReference>
<dbReference type="GO" id="GO:0005576">
    <property type="term" value="C:extracellular region"/>
    <property type="evidence" value="ECO:0007669"/>
    <property type="project" value="UniProtKB-KW"/>
</dbReference>
<dbReference type="GO" id="GO:0005886">
    <property type="term" value="C:plasma membrane"/>
    <property type="evidence" value="ECO:0007669"/>
    <property type="project" value="UniProtKB-SubCell"/>
</dbReference>
<dbReference type="GO" id="GO:0098552">
    <property type="term" value="C:side of membrane"/>
    <property type="evidence" value="ECO:0007669"/>
    <property type="project" value="UniProtKB-KW"/>
</dbReference>
<dbReference type="GO" id="GO:0008061">
    <property type="term" value="F:chitin binding"/>
    <property type="evidence" value="ECO:0007669"/>
    <property type="project" value="UniProtKB-KW"/>
</dbReference>
<dbReference type="GO" id="GO:0008843">
    <property type="term" value="F:endochitinase activity"/>
    <property type="evidence" value="ECO:0007669"/>
    <property type="project" value="UniProtKB-EC"/>
</dbReference>
<dbReference type="GO" id="GO:0006032">
    <property type="term" value="P:chitin catabolic process"/>
    <property type="evidence" value="ECO:0007669"/>
    <property type="project" value="UniProtKB-KW"/>
</dbReference>
<dbReference type="GO" id="GO:0000272">
    <property type="term" value="P:polysaccharide catabolic process"/>
    <property type="evidence" value="ECO:0007669"/>
    <property type="project" value="UniProtKB-KW"/>
</dbReference>
<dbReference type="CDD" id="cd02877">
    <property type="entry name" value="GH18_hevamine_XipI_class_III"/>
    <property type="match status" value="1"/>
</dbReference>
<dbReference type="FunFam" id="3.20.20.80:FF:000150">
    <property type="entry name" value="Class III chitinase ChiA1"/>
    <property type="match status" value="1"/>
</dbReference>
<dbReference type="Gene3D" id="3.20.20.80">
    <property type="entry name" value="Glycosidases"/>
    <property type="match status" value="1"/>
</dbReference>
<dbReference type="InterPro" id="IPR045321">
    <property type="entry name" value="Cts1-like"/>
</dbReference>
<dbReference type="InterPro" id="IPR001223">
    <property type="entry name" value="Glyco_hydro18_cat"/>
</dbReference>
<dbReference type="InterPro" id="IPR001579">
    <property type="entry name" value="Glyco_hydro_18_chit_AS"/>
</dbReference>
<dbReference type="InterPro" id="IPR017853">
    <property type="entry name" value="Glycoside_hydrolase_SF"/>
</dbReference>
<dbReference type="InterPro" id="IPR050542">
    <property type="entry name" value="Glycosyl_Hydrlase18_Chitinase"/>
</dbReference>
<dbReference type="PANTHER" id="PTHR45708">
    <property type="entry name" value="ENDOCHITINASE"/>
    <property type="match status" value="1"/>
</dbReference>
<dbReference type="PANTHER" id="PTHR45708:SF47">
    <property type="entry name" value="ENDOCHITINASE A"/>
    <property type="match status" value="1"/>
</dbReference>
<dbReference type="Pfam" id="PF00704">
    <property type="entry name" value="Glyco_hydro_18"/>
    <property type="match status" value="1"/>
</dbReference>
<dbReference type="SUPFAM" id="SSF51445">
    <property type="entry name" value="(Trans)glycosidases"/>
    <property type="match status" value="1"/>
</dbReference>
<dbReference type="PROSITE" id="PS01095">
    <property type="entry name" value="GH18_1"/>
    <property type="match status" value="1"/>
</dbReference>
<dbReference type="PROSITE" id="PS51910">
    <property type="entry name" value="GH18_2"/>
    <property type="match status" value="1"/>
</dbReference>
<reference key="1">
    <citation type="journal article" date="2007" name="Nat. Biotechnol.">
        <title>Genome sequencing and analysis of the versatile cell factory Aspergillus niger CBS 513.88.</title>
        <authorList>
            <person name="Pel H.J."/>
            <person name="de Winde J.H."/>
            <person name="Archer D.B."/>
            <person name="Dyer P.S."/>
            <person name="Hofmann G."/>
            <person name="Schaap P.J."/>
            <person name="Turner G."/>
            <person name="de Vries R.P."/>
            <person name="Albang R."/>
            <person name="Albermann K."/>
            <person name="Andersen M.R."/>
            <person name="Bendtsen J.D."/>
            <person name="Benen J.A.E."/>
            <person name="van den Berg M."/>
            <person name="Breestraat S."/>
            <person name="Caddick M.X."/>
            <person name="Contreras R."/>
            <person name="Cornell M."/>
            <person name="Coutinho P.M."/>
            <person name="Danchin E.G.J."/>
            <person name="Debets A.J.M."/>
            <person name="Dekker P."/>
            <person name="van Dijck P.W.M."/>
            <person name="van Dijk A."/>
            <person name="Dijkhuizen L."/>
            <person name="Driessen A.J.M."/>
            <person name="d'Enfert C."/>
            <person name="Geysens S."/>
            <person name="Goosen C."/>
            <person name="Groot G.S.P."/>
            <person name="de Groot P.W.J."/>
            <person name="Guillemette T."/>
            <person name="Henrissat B."/>
            <person name="Herweijer M."/>
            <person name="van den Hombergh J.P.T.W."/>
            <person name="van den Hondel C.A.M.J.J."/>
            <person name="van der Heijden R.T.J.M."/>
            <person name="van der Kaaij R.M."/>
            <person name="Klis F.M."/>
            <person name="Kools H.J."/>
            <person name="Kubicek C.P."/>
            <person name="van Kuyk P.A."/>
            <person name="Lauber J."/>
            <person name="Lu X."/>
            <person name="van der Maarel M.J.E.C."/>
            <person name="Meulenberg R."/>
            <person name="Menke H."/>
            <person name="Mortimer M.A."/>
            <person name="Nielsen J."/>
            <person name="Oliver S.G."/>
            <person name="Olsthoorn M."/>
            <person name="Pal K."/>
            <person name="van Peij N.N.M.E."/>
            <person name="Ram A.F.J."/>
            <person name="Rinas U."/>
            <person name="Roubos J.A."/>
            <person name="Sagt C.M.J."/>
            <person name="Schmoll M."/>
            <person name="Sun J."/>
            <person name="Ussery D."/>
            <person name="Varga J."/>
            <person name="Vervecken W."/>
            <person name="van de Vondervoort P.J.J."/>
            <person name="Wedler H."/>
            <person name="Woesten H.A.B."/>
            <person name="Zeng A.-P."/>
            <person name="van Ooyen A.J.J."/>
            <person name="Visser J."/>
            <person name="Stam H."/>
        </authorList>
    </citation>
    <scope>NUCLEOTIDE SEQUENCE [LARGE SCALE GENOMIC DNA]</scope>
    <source>
        <strain>ATCC MYA-4892 / CBS 513.88 / FGSC A1513</strain>
    </source>
</reference>
<reference key="2">
    <citation type="journal article" date="2007" name="BMC Genomics">
        <title>Genomic analysis of the secretion stress response in the enzyme-producing cell factory Aspergillus niger.</title>
        <authorList>
            <person name="Guillemette T."/>
            <person name="van Peij N."/>
            <person name="Goosen T."/>
            <person name="Lanthaler K."/>
            <person name="Robson G.D."/>
            <person name="van den Hondel C.A."/>
            <person name="Stam H."/>
            <person name="Archer D.B."/>
        </authorList>
    </citation>
    <scope>INDUCTION</scope>
</reference>
<reference key="3">
    <citation type="journal article" date="2013" name="Stud. Mycol.">
        <title>Germination of conidia of Aspergillus niger is accompanied by major changes in RNA profiles.</title>
        <authorList>
            <person name="van Leeuwen M.R."/>
            <person name="Krijgsheld P."/>
            <person name="Bleichrodt R."/>
            <person name="Menke H."/>
            <person name="Stam H."/>
            <person name="Stark J."/>
            <person name="Wosten H.A."/>
            <person name="Dijksterhuis J."/>
        </authorList>
    </citation>
    <scope>INDUCTION</scope>
</reference>